<proteinExistence type="inferred from homology"/>
<gene>
    <name type="primary">lia1</name>
    <name type="ORF">AN7498</name>
</gene>
<feature type="chain" id="PRO_0000283664" description="Deoxyhypusine hydroxylase">
    <location>
        <begin position="1"/>
        <end position="336"/>
    </location>
</feature>
<feature type="repeat" description="HEAT-like PBS-type 1">
    <location>
        <begin position="68"/>
        <end position="94"/>
    </location>
</feature>
<feature type="repeat" description="HEAT-like PBS-type 2">
    <location>
        <begin position="101"/>
        <end position="127"/>
    </location>
</feature>
<feature type="repeat" description="HEAT-like PBS-type 3">
    <location>
        <begin position="235"/>
        <end position="261"/>
    </location>
</feature>
<feature type="repeat" description="HEAT-like PBS-type 4">
    <location>
        <begin position="268"/>
        <end position="295"/>
    </location>
</feature>
<feature type="region of interest" description="Disordered" evidence="2">
    <location>
        <begin position="158"/>
        <end position="179"/>
    </location>
</feature>
<feature type="binding site" evidence="1">
    <location>
        <position position="70"/>
    </location>
    <ligand>
        <name>Fe cation</name>
        <dbReference type="ChEBI" id="CHEBI:24875"/>
        <label>1</label>
    </ligand>
</feature>
<feature type="binding site" evidence="1">
    <location>
        <position position="71"/>
    </location>
    <ligand>
        <name>Fe cation</name>
        <dbReference type="ChEBI" id="CHEBI:24875"/>
        <label>1</label>
    </ligand>
</feature>
<feature type="binding site" evidence="1">
    <location>
        <position position="103"/>
    </location>
    <ligand>
        <name>Fe cation</name>
        <dbReference type="ChEBI" id="CHEBI:24875"/>
        <label>1</label>
    </ligand>
</feature>
<feature type="binding site" evidence="1">
    <location>
        <position position="104"/>
    </location>
    <ligand>
        <name>Fe cation</name>
        <dbReference type="ChEBI" id="CHEBI:24875"/>
        <label>1</label>
    </ligand>
</feature>
<feature type="binding site" evidence="1">
    <location>
        <position position="237"/>
    </location>
    <ligand>
        <name>Fe cation</name>
        <dbReference type="ChEBI" id="CHEBI:24875"/>
        <label>2</label>
    </ligand>
</feature>
<feature type="binding site" evidence="1">
    <location>
        <position position="238"/>
    </location>
    <ligand>
        <name>Fe cation</name>
        <dbReference type="ChEBI" id="CHEBI:24875"/>
        <label>2</label>
    </ligand>
</feature>
<feature type="binding site" evidence="1">
    <location>
        <position position="270"/>
    </location>
    <ligand>
        <name>Fe cation</name>
        <dbReference type="ChEBI" id="CHEBI:24875"/>
        <label>2</label>
    </ligand>
</feature>
<feature type="binding site" evidence="1">
    <location>
        <position position="271"/>
    </location>
    <ligand>
        <name>Fe cation</name>
        <dbReference type="ChEBI" id="CHEBI:24875"/>
        <label>2</label>
    </ligand>
</feature>
<reference key="1">
    <citation type="journal article" date="2005" name="Nature">
        <title>Sequencing of Aspergillus nidulans and comparative analysis with A. fumigatus and A. oryzae.</title>
        <authorList>
            <person name="Galagan J.E."/>
            <person name="Calvo S.E."/>
            <person name="Cuomo C."/>
            <person name="Ma L.-J."/>
            <person name="Wortman J.R."/>
            <person name="Batzoglou S."/>
            <person name="Lee S.-I."/>
            <person name="Bastuerkmen M."/>
            <person name="Spevak C.C."/>
            <person name="Clutterbuck J."/>
            <person name="Kapitonov V."/>
            <person name="Jurka J."/>
            <person name="Scazzocchio C."/>
            <person name="Farman M.L."/>
            <person name="Butler J."/>
            <person name="Purcell S."/>
            <person name="Harris S."/>
            <person name="Braus G.H."/>
            <person name="Draht O."/>
            <person name="Busch S."/>
            <person name="D'Enfert C."/>
            <person name="Bouchier C."/>
            <person name="Goldman G.H."/>
            <person name="Bell-Pedersen D."/>
            <person name="Griffiths-Jones S."/>
            <person name="Doonan J.H."/>
            <person name="Yu J."/>
            <person name="Vienken K."/>
            <person name="Pain A."/>
            <person name="Freitag M."/>
            <person name="Selker E.U."/>
            <person name="Archer D.B."/>
            <person name="Penalva M.A."/>
            <person name="Oakley B.R."/>
            <person name="Momany M."/>
            <person name="Tanaka T."/>
            <person name="Kumagai T."/>
            <person name="Asai K."/>
            <person name="Machida M."/>
            <person name="Nierman W.C."/>
            <person name="Denning D.W."/>
            <person name="Caddick M.X."/>
            <person name="Hynes M."/>
            <person name="Paoletti M."/>
            <person name="Fischer R."/>
            <person name="Miller B.L."/>
            <person name="Dyer P.S."/>
            <person name="Sachs M.S."/>
            <person name="Osmani S.A."/>
            <person name="Birren B.W."/>
        </authorList>
    </citation>
    <scope>NUCLEOTIDE SEQUENCE [LARGE SCALE GENOMIC DNA]</scope>
    <source>
        <strain>FGSC A4 / ATCC 38163 / CBS 112.46 / NRRL 194 / M139</strain>
    </source>
</reference>
<reference key="2">
    <citation type="journal article" date="2009" name="Fungal Genet. Biol.">
        <title>The 2008 update of the Aspergillus nidulans genome annotation: a community effort.</title>
        <authorList>
            <person name="Wortman J.R."/>
            <person name="Gilsenan J.M."/>
            <person name="Joardar V."/>
            <person name="Deegan J."/>
            <person name="Clutterbuck J."/>
            <person name="Andersen M.R."/>
            <person name="Archer D."/>
            <person name="Bencina M."/>
            <person name="Braus G."/>
            <person name="Coutinho P."/>
            <person name="von Dohren H."/>
            <person name="Doonan J."/>
            <person name="Driessen A.J."/>
            <person name="Durek P."/>
            <person name="Espeso E."/>
            <person name="Fekete E."/>
            <person name="Flipphi M."/>
            <person name="Estrada C.G."/>
            <person name="Geysens S."/>
            <person name="Goldman G."/>
            <person name="de Groot P.W."/>
            <person name="Hansen K."/>
            <person name="Harris S.D."/>
            <person name="Heinekamp T."/>
            <person name="Helmstaedt K."/>
            <person name="Henrissat B."/>
            <person name="Hofmann G."/>
            <person name="Homan T."/>
            <person name="Horio T."/>
            <person name="Horiuchi H."/>
            <person name="James S."/>
            <person name="Jones M."/>
            <person name="Karaffa L."/>
            <person name="Karanyi Z."/>
            <person name="Kato M."/>
            <person name="Keller N."/>
            <person name="Kelly D.E."/>
            <person name="Kiel J.A."/>
            <person name="Kim J.M."/>
            <person name="van der Klei I.J."/>
            <person name="Klis F.M."/>
            <person name="Kovalchuk A."/>
            <person name="Krasevec N."/>
            <person name="Kubicek C.P."/>
            <person name="Liu B."/>
            <person name="Maccabe A."/>
            <person name="Meyer V."/>
            <person name="Mirabito P."/>
            <person name="Miskei M."/>
            <person name="Mos M."/>
            <person name="Mullins J."/>
            <person name="Nelson D.R."/>
            <person name="Nielsen J."/>
            <person name="Oakley B.R."/>
            <person name="Osmani S.A."/>
            <person name="Pakula T."/>
            <person name="Paszewski A."/>
            <person name="Paulsen I."/>
            <person name="Pilsyk S."/>
            <person name="Pocsi I."/>
            <person name="Punt P.J."/>
            <person name="Ram A.F."/>
            <person name="Ren Q."/>
            <person name="Robellet X."/>
            <person name="Robson G."/>
            <person name="Seiboth B."/>
            <person name="van Solingen P."/>
            <person name="Specht T."/>
            <person name="Sun J."/>
            <person name="Taheri-Talesh N."/>
            <person name="Takeshita N."/>
            <person name="Ussery D."/>
            <person name="vanKuyk P.A."/>
            <person name="Visser H."/>
            <person name="van de Vondervoort P.J."/>
            <person name="de Vries R.P."/>
            <person name="Walton J."/>
            <person name="Xiang X."/>
            <person name="Xiong Y."/>
            <person name="Zeng A.P."/>
            <person name="Brandt B.W."/>
            <person name="Cornell M.J."/>
            <person name="van den Hondel C.A."/>
            <person name="Visser J."/>
            <person name="Oliver S.G."/>
            <person name="Turner G."/>
        </authorList>
    </citation>
    <scope>GENOME REANNOTATION</scope>
    <source>
        <strain>FGSC A4 / ATCC 38163 / CBS 112.46 / NRRL 194 / M139</strain>
    </source>
</reference>
<accession>Q5AW32</accession>
<accession>C8VBH9</accession>
<evidence type="ECO:0000255" key="1">
    <source>
        <dbReference type="HAMAP-Rule" id="MF_03101"/>
    </source>
</evidence>
<evidence type="ECO:0000256" key="2">
    <source>
        <dbReference type="SAM" id="MobiDB-lite"/>
    </source>
</evidence>
<sequence length="336" mass="36666">MTTDNLNSADTTVQTLRNVLTSETEPLARRFRALFSLKHLACLQPPTEKTLPAIQAIAAGFSSASALLKHELAYCLGQTRNTDALPFLLDVVQDTQEDSMCRHEAAEALGALGYESSLEVLKALRDNENEVDVVRETCDIAVDRILWEQSEARKAEKLKPSDFTSIDPAPPMPLTAKEPSIPDLEKTLLDTNLPLFERYRAMFGLRDLASPPDLPTAKQAVQSLAKGMKDPSALFRHEIAFVFGQLCHPASVPSLTETLSDLNEVGMVRHEAAEALGSLGDVEGVEDTLKKFLNDPEKVVRDSIIVALDMAEFEKNGEIEYALIPDSGNPAAVPAA</sequence>
<dbReference type="EC" id="1.14.99.29" evidence="1"/>
<dbReference type="EMBL" id="AACD01000129">
    <property type="protein sequence ID" value="EAA62078.1"/>
    <property type="molecule type" value="Genomic_DNA"/>
</dbReference>
<dbReference type="EMBL" id="BN001304">
    <property type="protein sequence ID" value="CBF79503.1"/>
    <property type="molecule type" value="Genomic_DNA"/>
</dbReference>
<dbReference type="RefSeq" id="XP_680767.1">
    <property type="nucleotide sequence ID" value="XM_675675.1"/>
</dbReference>
<dbReference type="SMR" id="Q5AW32"/>
<dbReference type="FunCoup" id="Q5AW32">
    <property type="interactions" value="891"/>
</dbReference>
<dbReference type="STRING" id="227321.Q5AW32"/>
<dbReference type="EnsemblFungi" id="CBF79503">
    <property type="protein sequence ID" value="CBF79503"/>
    <property type="gene ID" value="ANIA_07498"/>
</dbReference>
<dbReference type="KEGG" id="ani:ANIA_07498"/>
<dbReference type="VEuPathDB" id="FungiDB:AN7498"/>
<dbReference type="eggNOG" id="KOG0567">
    <property type="taxonomic scope" value="Eukaryota"/>
</dbReference>
<dbReference type="HOGENOM" id="CLU_053974_0_0_1"/>
<dbReference type="InParanoid" id="Q5AW32"/>
<dbReference type="OMA" id="LQEPCSI"/>
<dbReference type="OrthoDB" id="421002at2759"/>
<dbReference type="UniPathway" id="UPA00354"/>
<dbReference type="Proteomes" id="UP000000560">
    <property type="component" value="Chromosome IV"/>
</dbReference>
<dbReference type="GO" id="GO:0005737">
    <property type="term" value="C:cytoplasm"/>
    <property type="evidence" value="ECO:0007669"/>
    <property type="project" value="UniProtKB-SubCell"/>
</dbReference>
<dbReference type="GO" id="GO:0005634">
    <property type="term" value="C:nucleus"/>
    <property type="evidence" value="ECO:0007669"/>
    <property type="project" value="UniProtKB-SubCell"/>
</dbReference>
<dbReference type="GO" id="GO:0019135">
    <property type="term" value="F:deoxyhypusine monooxygenase activity"/>
    <property type="evidence" value="ECO:0000318"/>
    <property type="project" value="GO_Central"/>
</dbReference>
<dbReference type="GO" id="GO:0046872">
    <property type="term" value="F:metal ion binding"/>
    <property type="evidence" value="ECO:0007669"/>
    <property type="project" value="UniProtKB-KW"/>
</dbReference>
<dbReference type="Gene3D" id="1.25.10.10">
    <property type="entry name" value="Leucine-rich Repeat Variant"/>
    <property type="match status" value="2"/>
</dbReference>
<dbReference type="HAMAP" id="MF_03101">
    <property type="entry name" value="Deoxyhypusine_hydroxylase"/>
    <property type="match status" value="1"/>
</dbReference>
<dbReference type="InterPro" id="IPR011989">
    <property type="entry name" value="ARM-like"/>
</dbReference>
<dbReference type="InterPro" id="IPR016024">
    <property type="entry name" value="ARM-type_fold"/>
</dbReference>
<dbReference type="InterPro" id="IPR027517">
    <property type="entry name" value="Deoxyhypusine_hydroxylase"/>
</dbReference>
<dbReference type="InterPro" id="IPR021133">
    <property type="entry name" value="HEAT_type_2"/>
</dbReference>
<dbReference type="InterPro" id="IPR004155">
    <property type="entry name" value="PBS_lyase_HEAT"/>
</dbReference>
<dbReference type="PANTHER" id="PTHR12697:SF5">
    <property type="entry name" value="DEOXYHYPUSINE HYDROXYLASE"/>
    <property type="match status" value="1"/>
</dbReference>
<dbReference type="PANTHER" id="PTHR12697">
    <property type="entry name" value="PBS LYASE HEAT-LIKE PROTEIN"/>
    <property type="match status" value="1"/>
</dbReference>
<dbReference type="Pfam" id="PF13646">
    <property type="entry name" value="HEAT_2"/>
    <property type="match status" value="2"/>
</dbReference>
<dbReference type="SMART" id="SM00567">
    <property type="entry name" value="EZ_HEAT"/>
    <property type="match status" value="5"/>
</dbReference>
<dbReference type="SUPFAM" id="SSF48371">
    <property type="entry name" value="ARM repeat"/>
    <property type="match status" value="1"/>
</dbReference>
<dbReference type="PROSITE" id="PS50077">
    <property type="entry name" value="HEAT_REPEAT"/>
    <property type="match status" value="1"/>
</dbReference>
<comment type="function">
    <text evidence="1">Catalyzes the hydroxylation of the N(6)-(4-aminobutyl)-L-lysine intermediate to form hypusine, an essential post-translational modification only found in mature eIF-5A factor.</text>
</comment>
<comment type="catalytic activity">
    <reaction evidence="1">
        <text>[eIF5A protein]-deoxyhypusine + AH2 + O2 = [eIF5A protein]-hypusine + A + H2O</text>
        <dbReference type="Rhea" id="RHEA:14101"/>
        <dbReference type="Rhea" id="RHEA-COMP:10144"/>
        <dbReference type="Rhea" id="RHEA-COMP:12592"/>
        <dbReference type="ChEBI" id="CHEBI:13193"/>
        <dbReference type="ChEBI" id="CHEBI:15377"/>
        <dbReference type="ChEBI" id="CHEBI:15379"/>
        <dbReference type="ChEBI" id="CHEBI:17499"/>
        <dbReference type="ChEBI" id="CHEBI:82657"/>
        <dbReference type="ChEBI" id="CHEBI:91175"/>
        <dbReference type="EC" id="1.14.99.29"/>
    </reaction>
</comment>
<comment type="cofactor">
    <cofactor evidence="1">
        <name>Fe(2+)</name>
        <dbReference type="ChEBI" id="CHEBI:29033"/>
    </cofactor>
    <text evidence="1">Binds 2 Fe(2+) ions per subunit.</text>
</comment>
<comment type="pathway">
    <text evidence="1">Protein modification; eIF5A hypusination.</text>
</comment>
<comment type="subcellular location">
    <subcellularLocation>
        <location evidence="1">Cytoplasm</location>
    </subcellularLocation>
    <subcellularLocation>
        <location evidence="1">Nucleus</location>
    </subcellularLocation>
</comment>
<comment type="similarity">
    <text evidence="1">Belongs to the deoxyhypusine hydroxylase family.</text>
</comment>
<name>DOHH_EMENI</name>
<keyword id="KW-0963">Cytoplasm</keyword>
<keyword id="KW-0386">Hypusine biosynthesis</keyword>
<keyword id="KW-0408">Iron</keyword>
<keyword id="KW-0479">Metal-binding</keyword>
<keyword id="KW-0503">Monooxygenase</keyword>
<keyword id="KW-0539">Nucleus</keyword>
<keyword id="KW-0560">Oxidoreductase</keyword>
<keyword id="KW-1185">Reference proteome</keyword>
<keyword id="KW-0677">Repeat</keyword>
<organism>
    <name type="scientific">Emericella nidulans (strain FGSC A4 / ATCC 38163 / CBS 112.46 / NRRL 194 / M139)</name>
    <name type="common">Aspergillus nidulans</name>
    <dbReference type="NCBI Taxonomy" id="227321"/>
    <lineage>
        <taxon>Eukaryota</taxon>
        <taxon>Fungi</taxon>
        <taxon>Dikarya</taxon>
        <taxon>Ascomycota</taxon>
        <taxon>Pezizomycotina</taxon>
        <taxon>Eurotiomycetes</taxon>
        <taxon>Eurotiomycetidae</taxon>
        <taxon>Eurotiales</taxon>
        <taxon>Aspergillaceae</taxon>
        <taxon>Aspergillus</taxon>
        <taxon>Aspergillus subgen. Nidulantes</taxon>
    </lineage>
</organism>
<protein>
    <recommendedName>
        <fullName evidence="1">Deoxyhypusine hydroxylase</fullName>
        <shortName evidence="1">DOHH</shortName>
        <ecNumber evidence="1">1.14.99.29</ecNumber>
    </recommendedName>
    <alternativeName>
        <fullName evidence="1">Deoxyhypusine dioxygenase</fullName>
    </alternativeName>
    <alternativeName>
        <fullName evidence="1">Deoxyhypusine monooxygenase</fullName>
    </alternativeName>
</protein>